<dbReference type="EMBL" id="AK133815">
    <property type="protein sequence ID" value="BAE21858.1"/>
    <property type="molecule type" value="mRNA"/>
</dbReference>
<dbReference type="EMBL" id="BC008558">
    <property type="protein sequence ID" value="AAH08558.1"/>
    <property type="molecule type" value="mRNA"/>
</dbReference>
<dbReference type="CCDS" id="CCDS22414.1"/>
<dbReference type="RefSeq" id="NP_082446.2">
    <property type="nucleotide sequence ID" value="NM_028170.2"/>
</dbReference>
<dbReference type="SMR" id="Q922C1"/>
<dbReference type="FunCoup" id="Q922C1">
    <property type="interactions" value="78"/>
</dbReference>
<dbReference type="iPTMnet" id="Q922C1"/>
<dbReference type="PhosphoSitePlus" id="Q922C1"/>
<dbReference type="PaxDb" id="10090-ENSMUSP00000063244"/>
<dbReference type="Antibodypedia" id="51085">
    <property type="antibodies" value="57 antibodies from 16 providers"/>
</dbReference>
<dbReference type="Ensembl" id="ENSMUST00000064853.13">
    <property type="protein sequence ID" value="ENSMUSP00000063244.7"/>
    <property type="gene ID" value="ENSMUSG00000052794.14"/>
</dbReference>
<dbReference type="GeneID" id="72254"/>
<dbReference type="KEGG" id="mmu:72254"/>
<dbReference type="UCSC" id="uc009mfy.2">
    <property type="organism name" value="mouse"/>
</dbReference>
<dbReference type="AGR" id="MGI:1919504"/>
<dbReference type="MGI" id="MGI:1919504">
    <property type="gene designation" value="1700030K09Rik"/>
</dbReference>
<dbReference type="VEuPathDB" id="HostDB:ENSMUSG00000052794"/>
<dbReference type="eggNOG" id="ENOG502RMHR">
    <property type="taxonomic scope" value="Eukaryota"/>
</dbReference>
<dbReference type="GeneTree" id="ENSGT00390000002505"/>
<dbReference type="InParanoid" id="Q922C1"/>
<dbReference type="OMA" id="DISLEDX"/>
<dbReference type="OrthoDB" id="2151530at2759"/>
<dbReference type="PhylomeDB" id="Q922C1"/>
<dbReference type="TreeFam" id="TF330762"/>
<dbReference type="BioGRID-ORCS" id="72254">
    <property type="hits" value="2 hits in 78 CRISPR screens"/>
</dbReference>
<dbReference type="PRO" id="PR:Q922C1"/>
<dbReference type="Proteomes" id="UP000000589">
    <property type="component" value="Chromosome 8"/>
</dbReference>
<dbReference type="RNAct" id="Q922C1">
    <property type="molecule type" value="protein"/>
</dbReference>
<dbReference type="Bgee" id="ENSMUSG00000052794">
    <property type="expression patterns" value="Expressed in seminiferous tubule of testis and 245 other cell types or tissues"/>
</dbReference>
<dbReference type="ExpressionAtlas" id="Q922C1">
    <property type="expression patterns" value="baseline and differential"/>
</dbReference>
<dbReference type="InterPro" id="IPR040120">
    <property type="entry name" value="C19orf44-like"/>
</dbReference>
<dbReference type="InterPro" id="IPR027884">
    <property type="entry name" value="DUF4614"/>
</dbReference>
<dbReference type="PANTHER" id="PTHR22409">
    <property type="entry name" value="CHROMOSOME 19 OPEN READING FRAME 44"/>
    <property type="match status" value="1"/>
</dbReference>
<dbReference type="PANTHER" id="PTHR22409:SF2">
    <property type="entry name" value="CHROMOSOME 19 OPEN READING FRAME 44"/>
    <property type="match status" value="1"/>
</dbReference>
<dbReference type="Pfam" id="PF15391">
    <property type="entry name" value="DUF4614"/>
    <property type="match status" value="1"/>
</dbReference>
<organism>
    <name type="scientific">Mus musculus</name>
    <name type="common">Mouse</name>
    <dbReference type="NCBI Taxonomy" id="10090"/>
    <lineage>
        <taxon>Eukaryota</taxon>
        <taxon>Metazoa</taxon>
        <taxon>Chordata</taxon>
        <taxon>Craniata</taxon>
        <taxon>Vertebrata</taxon>
        <taxon>Euteleostomi</taxon>
        <taxon>Mammalia</taxon>
        <taxon>Eutheria</taxon>
        <taxon>Euarchontoglires</taxon>
        <taxon>Glires</taxon>
        <taxon>Rodentia</taxon>
        <taxon>Myomorpha</taxon>
        <taxon>Muroidea</taxon>
        <taxon>Muridae</taxon>
        <taxon>Murinae</taxon>
        <taxon>Mus</taxon>
        <taxon>Mus</taxon>
    </lineage>
</organism>
<sequence>MASTRRPFGPPRSGFDLRDMFLDSSRMEEIRNLQARSLGQVTPGQSRILKRNQTMDEKYLMPKEEAMAGRGVSLGLRPPTISSKTRASEALRKLAQIETKILNRKQVPMAWSDVESDSTSIEQSLPKRTGAASVSSQYPHRTFQKQVNKTCVSKSDGPSGNGSRFLKKKELPTEARSPGLAVGTGKQALLPTKKESASDEEEEMLLLRSLMESSREKEANRNQELPGSSVSRSNLGKVFLDPTPDQPGVLSLLSVDQSSLKSPRPIQSTRVGLRTHSRQASSAGDTVSITASPPILDDFSKSASSKMGCIKLASSPSRTELESSEEPVSEAAADSLHDFRINILSIDDLVLADGDKSDGDQREEDCVREGISVRSSSPTSPTRLEAQMWPKNCVFQGTATVVGDGEGLTTESDVSEPPGTSSSAAVQSHSMSRALTASPAYSEDFEQFSGPLALEESLDRTLDTLSKFSSSGQTDIVARQPLSRTEWGRGVTRVVKETAVQTLDPAFAYQWSKAGGIAAVGPALGGAYVDPAPIASHIVSADAIEALTAYSPAVLALNDMLKQQLSLTQQFIEASHQLHGSLLQSLDGDSFHYHTLEEAKEYIRCHRPAPLTMEAALQEVREELQVPASEACLGTCPPRNQ</sequence>
<protein>
    <recommendedName>
        <fullName>Uncharacterized protein C19orf44 homolog</fullName>
    </recommendedName>
</protein>
<evidence type="ECO:0000250" key="1">
    <source>
        <dbReference type="UniProtKB" id="Q6AXP1"/>
    </source>
</evidence>
<evidence type="ECO:0000250" key="2">
    <source>
        <dbReference type="UniProtKB" id="Q9H6X5"/>
    </source>
</evidence>
<evidence type="ECO:0000256" key="3">
    <source>
        <dbReference type="SAM" id="MobiDB-lite"/>
    </source>
</evidence>
<evidence type="ECO:0000305" key="4"/>
<proteinExistence type="evidence at protein level"/>
<accession>Q922C1</accession>
<accession>Q3UZJ9</accession>
<feature type="chain" id="PRO_0000291922" description="Uncharacterized protein C19orf44 homolog">
    <location>
        <begin position="1"/>
        <end position="641"/>
    </location>
</feature>
<feature type="region of interest" description="Disordered" evidence="3">
    <location>
        <begin position="118"/>
        <end position="243"/>
    </location>
</feature>
<feature type="region of interest" description="Disordered" evidence="3">
    <location>
        <begin position="261"/>
        <end position="289"/>
    </location>
</feature>
<feature type="region of interest" description="Disordered" evidence="3">
    <location>
        <begin position="355"/>
        <end position="386"/>
    </location>
</feature>
<feature type="region of interest" description="Disordered" evidence="3">
    <location>
        <begin position="404"/>
        <end position="430"/>
    </location>
</feature>
<feature type="compositionally biased region" description="Polar residues" evidence="3">
    <location>
        <begin position="132"/>
        <end position="162"/>
    </location>
</feature>
<feature type="compositionally biased region" description="Polar residues" evidence="3">
    <location>
        <begin position="222"/>
        <end position="234"/>
    </location>
</feature>
<feature type="compositionally biased region" description="Polar residues" evidence="3">
    <location>
        <begin position="278"/>
        <end position="289"/>
    </location>
</feature>
<feature type="compositionally biased region" description="Basic and acidic residues" evidence="3">
    <location>
        <begin position="355"/>
        <end position="368"/>
    </location>
</feature>
<feature type="compositionally biased region" description="Low complexity" evidence="3">
    <location>
        <begin position="374"/>
        <end position="383"/>
    </location>
</feature>
<feature type="compositionally biased region" description="Low complexity" evidence="3">
    <location>
        <begin position="421"/>
        <end position="430"/>
    </location>
</feature>
<feature type="modified residue" description="Phosphoserine" evidence="2">
    <location>
        <position position="112"/>
    </location>
</feature>
<feature type="modified residue" description="Phosphoserine" evidence="1">
    <location>
        <position position="198"/>
    </location>
</feature>
<feature type="sequence conflict" description="In Ref. 2; AAH08558." evidence="4" ref="2">
    <original>S</original>
    <variation>I</variation>
    <location>
        <position position="73"/>
    </location>
</feature>
<feature type="sequence conflict" description="In Ref. 2; AAH08558." evidence="4" ref="2">
    <original>R</original>
    <variation>G</variation>
    <location>
        <position position="208"/>
    </location>
</feature>
<feature type="sequence conflict" description="In Ref. 2; AAH08558." evidence="4" ref="2">
    <original>I</original>
    <variation>M</variation>
    <location>
        <position position="289"/>
    </location>
</feature>
<feature type="sequence conflict" description="In Ref. 2; AAH08558." evidence="4" ref="2">
    <original>N</original>
    <variation>T</variation>
    <location>
        <position position="392"/>
    </location>
</feature>
<feature type="sequence conflict" description="In Ref. 2; AAH08558." evidence="4" ref="2">
    <original>T</original>
    <variation>A</variation>
    <location>
        <position position="398"/>
    </location>
</feature>
<feature type="sequence conflict" description="In Ref. 2; AAH08558." evidence="4" ref="2">
    <original>G</original>
    <variation>E</variation>
    <location>
        <position position="405"/>
    </location>
</feature>
<feature type="sequence conflict" description="In Ref. 2; AAH08558." evidence="4" ref="2">
    <original>G</original>
    <variation>D</variation>
    <location>
        <position position="407"/>
    </location>
</feature>
<feature type="sequence conflict" description="In Ref. 2; AAH08558." evidence="4" ref="2">
    <original>H</original>
    <variation>Q</variation>
    <location>
        <position position="576"/>
    </location>
</feature>
<name>CS044_MOUSE</name>
<keyword id="KW-0597">Phosphoprotein</keyword>
<keyword id="KW-1185">Reference proteome</keyword>
<reference key="1">
    <citation type="journal article" date="2005" name="Science">
        <title>The transcriptional landscape of the mammalian genome.</title>
        <authorList>
            <person name="Carninci P."/>
            <person name="Kasukawa T."/>
            <person name="Katayama S."/>
            <person name="Gough J."/>
            <person name="Frith M.C."/>
            <person name="Maeda N."/>
            <person name="Oyama R."/>
            <person name="Ravasi T."/>
            <person name="Lenhard B."/>
            <person name="Wells C."/>
            <person name="Kodzius R."/>
            <person name="Shimokawa K."/>
            <person name="Bajic V.B."/>
            <person name="Brenner S.E."/>
            <person name="Batalov S."/>
            <person name="Forrest A.R."/>
            <person name="Zavolan M."/>
            <person name="Davis M.J."/>
            <person name="Wilming L.G."/>
            <person name="Aidinis V."/>
            <person name="Allen J.E."/>
            <person name="Ambesi-Impiombato A."/>
            <person name="Apweiler R."/>
            <person name="Aturaliya R.N."/>
            <person name="Bailey T.L."/>
            <person name="Bansal M."/>
            <person name="Baxter L."/>
            <person name="Beisel K.W."/>
            <person name="Bersano T."/>
            <person name="Bono H."/>
            <person name="Chalk A.M."/>
            <person name="Chiu K.P."/>
            <person name="Choudhary V."/>
            <person name="Christoffels A."/>
            <person name="Clutterbuck D.R."/>
            <person name="Crowe M.L."/>
            <person name="Dalla E."/>
            <person name="Dalrymple B.P."/>
            <person name="de Bono B."/>
            <person name="Della Gatta G."/>
            <person name="di Bernardo D."/>
            <person name="Down T."/>
            <person name="Engstrom P."/>
            <person name="Fagiolini M."/>
            <person name="Faulkner G."/>
            <person name="Fletcher C.F."/>
            <person name="Fukushima T."/>
            <person name="Furuno M."/>
            <person name="Futaki S."/>
            <person name="Gariboldi M."/>
            <person name="Georgii-Hemming P."/>
            <person name="Gingeras T.R."/>
            <person name="Gojobori T."/>
            <person name="Green R.E."/>
            <person name="Gustincich S."/>
            <person name="Harbers M."/>
            <person name="Hayashi Y."/>
            <person name="Hensch T.K."/>
            <person name="Hirokawa N."/>
            <person name="Hill D."/>
            <person name="Huminiecki L."/>
            <person name="Iacono M."/>
            <person name="Ikeo K."/>
            <person name="Iwama A."/>
            <person name="Ishikawa T."/>
            <person name="Jakt M."/>
            <person name="Kanapin A."/>
            <person name="Katoh M."/>
            <person name="Kawasawa Y."/>
            <person name="Kelso J."/>
            <person name="Kitamura H."/>
            <person name="Kitano H."/>
            <person name="Kollias G."/>
            <person name="Krishnan S.P."/>
            <person name="Kruger A."/>
            <person name="Kummerfeld S.K."/>
            <person name="Kurochkin I.V."/>
            <person name="Lareau L.F."/>
            <person name="Lazarevic D."/>
            <person name="Lipovich L."/>
            <person name="Liu J."/>
            <person name="Liuni S."/>
            <person name="McWilliam S."/>
            <person name="Madan Babu M."/>
            <person name="Madera M."/>
            <person name="Marchionni L."/>
            <person name="Matsuda H."/>
            <person name="Matsuzawa S."/>
            <person name="Miki H."/>
            <person name="Mignone F."/>
            <person name="Miyake S."/>
            <person name="Morris K."/>
            <person name="Mottagui-Tabar S."/>
            <person name="Mulder N."/>
            <person name="Nakano N."/>
            <person name="Nakauchi H."/>
            <person name="Ng P."/>
            <person name="Nilsson R."/>
            <person name="Nishiguchi S."/>
            <person name="Nishikawa S."/>
            <person name="Nori F."/>
            <person name="Ohara O."/>
            <person name="Okazaki Y."/>
            <person name="Orlando V."/>
            <person name="Pang K.C."/>
            <person name="Pavan W.J."/>
            <person name="Pavesi G."/>
            <person name="Pesole G."/>
            <person name="Petrovsky N."/>
            <person name="Piazza S."/>
            <person name="Reed J."/>
            <person name="Reid J.F."/>
            <person name="Ring B.Z."/>
            <person name="Ringwald M."/>
            <person name="Rost B."/>
            <person name="Ruan Y."/>
            <person name="Salzberg S.L."/>
            <person name="Sandelin A."/>
            <person name="Schneider C."/>
            <person name="Schoenbach C."/>
            <person name="Sekiguchi K."/>
            <person name="Semple C.A."/>
            <person name="Seno S."/>
            <person name="Sessa L."/>
            <person name="Sheng Y."/>
            <person name="Shibata Y."/>
            <person name="Shimada H."/>
            <person name="Shimada K."/>
            <person name="Silva D."/>
            <person name="Sinclair B."/>
            <person name="Sperling S."/>
            <person name="Stupka E."/>
            <person name="Sugiura K."/>
            <person name="Sultana R."/>
            <person name="Takenaka Y."/>
            <person name="Taki K."/>
            <person name="Tammoja K."/>
            <person name="Tan S.L."/>
            <person name="Tang S."/>
            <person name="Taylor M.S."/>
            <person name="Tegner J."/>
            <person name="Teichmann S.A."/>
            <person name="Ueda H.R."/>
            <person name="van Nimwegen E."/>
            <person name="Verardo R."/>
            <person name="Wei C.L."/>
            <person name="Yagi K."/>
            <person name="Yamanishi H."/>
            <person name="Zabarovsky E."/>
            <person name="Zhu S."/>
            <person name="Zimmer A."/>
            <person name="Hide W."/>
            <person name="Bult C."/>
            <person name="Grimmond S.M."/>
            <person name="Teasdale R.D."/>
            <person name="Liu E.T."/>
            <person name="Brusic V."/>
            <person name="Quackenbush J."/>
            <person name="Wahlestedt C."/>
            <person name="Mattick J.S."/>
            <person name="Hume D.A."/>
            <person name="Kai C."/>
            <person name="Sasaki D."/>
            <person name="Tomaru Y."/>
            <person name="Fukuda S."/>
            <person name="Kanamori-Katayama M."/>
            <person name="Suzuki M."/>
            <person name="Aoki J."/>
            <person name="Arakawa T."/>
            <person name="Iida J."/>
            <person name="Imamura K."/>
            <person name="Itoh M."/>
            <person name="Kato T."/>
            <person name="Kawaji H."/>
            <person name="Kawagashira N."/>
            <person name="Kawashima T."/>
            <person name="Kojima M."/>
            <person name="Kondo S."/>
            <person name="Konno H."/>
            <person name="Nakano K."/>
            <person name="Ninomiya N."/>
            <person name="Nishio T."/>
            <person name="Okada M."/>
            <person name="Plessy C."/>
            <person name="Shibata K."/>
            <person name="Shiraki T."/>
            <person name="Suzuki S."/>
            <person name="Tagami M."/>
            <person name="Waki K."/>
            <person name="Watahiki A."/>
            <person name="Okamura-Oho Y."/>
            <person name="Suzuki H."/>
            <person name="Kawai J."/>
            <person name="Hayashizaki Y."/>
        </authorList>
    </citation>
    <scope>NUCLEOTIDE SEQUENCE [LARGE SCALE MRNA]</scope>
    <source>
        <strain>C57BL/6J</strain>
        <tissue>Embryo</tissue>
    </source>
</reference>
<reference key="2">
    <citation type="journal article" date="2004" name="Genome Res.">
        <title>The status, quality, and expansion of the NIH full-length cDNA project: the Mammalian Gene Collection (MGC).</title>
        <authorList>
            <consortium name="The MGC Project Team"/>
        </authorList>
    </citation>
    <scope>NUCLEOTIDE SEQUENCE [LARGE SCALE MRNA]</scope>
    <source>
        <strain>FVB/N</strain>
        <tissue>Mammary tumor</tissue>
    </source>
</reference>
<reference key="3">
    <citation type="journal article" date="2009" name="Immunity">
        <title>The phagosomal proteome in interferon-gamma-activated macrophages.</title>
        <authorList>
            <person name="Trost M."/>
            <person name="English L."/>
            <person name="Lemieux S."/>
            <person name="Courcelles M."/>
            <person name="Desjardins M."/>
            <person name="Thibault P."/>
        </authorList>
    </citation>
    <scope>IDENTIFICATION BY MASS SPECTROMETRY [LARGE SCALE ANALYSIS]</scope>
</reference>
<reference key="4">
    <citation type="journal article" date="2010" name="Cell">
        <title>A tissue-specific atlas of mouse protein phosphorylation and expression.</title>
        <authorList>
            <person name="Huttlin E.L."/>
            <person name="Jedrychowski M.P."/>
            <person name="Elias J.E."/>
            <person name="Goswami T."/>
            <person name="Rad R."/>
            <person name="Beausoleil S.A."/>
            <person name="Villen J."/>
            <person name="Haas W."/>
            <person name="Sowa M.E."/>
            <person name="Gygi S.P."/>
        </authorList>
    </citation>
    <scope>IDENTIFICATION BY MASS SPECTROMETRY [LARGE SCALE ANALYSIS]</scope>
    <source>
        <tissue>Testis</tissue>
    </source>
</reference>